<sequence length="210" mass="22456">MADAKELKQVLIGPIVSNNPIALQILGVCSALAVTSKMETALVMTIALTAVCALSNLFISLIRNHIPSSVRIIVQMTIIASLVIVVDQVLQAYAYDVAKQLSVFVGLIITNCIVMGRAEAYAMKTPPMMSFMDGIGNGLGYGAILLSVGFVRELFGNGSLFGIEILSKISDGGWYQPNGLLLLPPSAFFLIGALIWIIRVMKPEQVEAKG</sequence>
<reference key="1">
    <citation type="submission" date="2007-10" db="EMBL/GenBank/DDBJ databases">
        <title>Complete sequence of Shewanella pealeana ATCC 700345.</title>
        <authorList>
            <consortium name="US DOE Joint Genome Institute"/>
            <person name="Copeland A."/>
            <person name="Lucas S."/>
            <person name="Lapidus A."/>
            <person name="Barry K."/>
            <person name="Glavina del Rio T."/>
            <person name="Dalin E."/>
            <person name="Tice H."/>
            <person name="Pitluck S."/>
            <person name="Chertkov O."/>
            <person name="Brettin T."/>
            <person name="Bruce D."/>
            <person name="Detter J.C."/>
            <person name="Han C."/>
            <person name="Schmutz J."/>
            <person name="Larimer F."/>
            <person name="Land M."/>
            <person name="Hauser L."/>
            <person name="Kyrpides N."/>
            <person name="Kim E."/>
            <person name="Zhao J.-S.Z."/>
            <person name="Manno D."/>
            <person name="Hawari J."/>
            <person name="Richardson P."/>
        </authorList>
    </citation>
    <scope>NUCLEOTIDE SEQUENCE [LARGE SCALE GENOMIC DNA]</scope>
    <source>
        <strain>ATCC 700345 / ANG-SQ1</strain>
    </source>
</reference>
<feature type="chain" id="PRO_1000080569" description="Na(+)-translocating NADH-quinone reductase subunit D">
    <location>
        <begin position="1"/>
        <end position="210"/>
    </location>
</feature>
<feature type="transmembrane region" description="Helical" evidence="1">
    <location>
        <begin position="10"/>
        <end position="30"/>
    </location>
</feature>
<feature type="transmembrane region" description="Helical" evidence="1">
    <location>
        <begin position="42"/>
        <end position="62"/>
    </location>
</feature>
<feature type="transmembrane region" description="Helical" evidence="1">
    <location>
        <begin position="72"/>
        <end position="92"/>
    </location>
</feature>
<feature type="transmembrane region" description="Helical" evidence="1">
    <location>
        <begin position="103"/>
        <end position="123"/>
    </location>
</feature>
<feature type="transmembrane region" description="Helical" evidence="1">
    <location>
        <begin position="131"/>
        <end position="151"/>
    </location>
</feature>
<feature type="transmembrane region" description="Helical" evidence="1">
    <location>
        <begin position="178"/>
        <end position="198"/>
    </location>
</feature>
<comment type="function">
    <text evidence="1">NQR complex catalyzes the reduction of ubiquinone-1 to ubiquinol by two successive reactions, coupled with the transport of Na(+) ions from the cytoplasm to the periplasm. NqrA to NqrE are probably involved in the second step, the conversion of ubisemiquinone to ubiquinol.</text>
</comment>
<comment type="catalytic activity">
    <reaction evidence="1">
        <text>a ubiquinone + n Na(+)(in) + NADH + H(+) = a ubiquinol + n Na(+)(out) + NAD(+)</text>
        <dbReference type="Rhea" id="RHEA:47748"/>
        <dbReference type="Rhea" id="RHEA-COMP:9565"/>
        <dbReference type="Rhea" id="RHEA-COMP:9566"/>
        <dbReference type="ChEBI" id="CHEBI:15378"/>
        <dbReference type="ChEBI" id="CHEBI:16389"/>
        <dbReference type="ChEBI" id="CHEBI:17976"/>
        <dbReference type="ChEBI" id="CHEBI:29101"/>
        <dbReference type="ChEBI" id="CHEBI:57540"/>
        <dbReference type="ChEBI" id="CHEBI:57945"/>
        <dbReference type="EC" id="7.2.1.1"/>
    </reaction>
</comment>
<comment type="subunit">
    <text evidence="1">Composed of six subunits; NqrA, NqrB, NqrC, NqrD, NqrE and NqrF.</text>
</comment>
<comment type="subcellular location">
    <subcellularLocation>
        <location evidence="1">Cell inner membrane</location>
        <topology evidence="1">Multi-pass membrane protein</topology>
    </subcellularLocation>
</comment>
<comment type="similarity">
    <text evidence="1">Belongs to the NqrDE/RnfAE family.</text>
</comment>
<name>NQRD_SHEPA</name>
<organism>
    <name type="scientific">Shewanella pealeana (strain ATCC 700345 / ANG-SQ1)</name>
    <dbReference type="NCBI Taxonomy" id="398579"/>
    <lineage>
        <taxon>Bacteria</taxon>
        <taxon>Pseudomonadati</taxon>
        <taxon>Pseudomonadota</taxon>
        <taxon>Gammaproteobacteria</taxon>
        <taxon>Alteromonadales</taxon>
        <taxon>Shewanellaceae</taxon>
        <taxon>Shewanella</taxon>
    </lineage>
</organism>
<evidence type="ECO:0000255" key="1">
    <source>
        <dbReference type="HAMAP-Rule" id="MF_00428"/>
    </source>
</evidence>
<proteinExistence type="inferred from homology"/>
<dbReference type="EC" id="7.2.1.1" evidence="1"/>
<dbReference type="EMBL" id="CP000851">
    <property type="protein sequence ID" value="ABV88416.1"/>
    <property type="molecule type" value="Genomic_DNA"/>
</dbReference>
<dbReference type="RefSeq" id="WP_012156318.1">
    <property type="nucleotide sequence ID" value="NC_009901.1"/>
</dbReference>
<dbReference type="SMR" id="A8H779"/>
<dbReference type="STRING" id="398579.Spea_3100"/>
<dbReference type="KEGG" id="spl:Spea_3100"/>
<dbReference type="eggNOG" id="COG1347">
    <property type="taxonomic scope" value="Bacteria"/>
</dbReference>
<dbReference type="HOGENOM" id="CLU_046659_1_1_6"/>
<dbReference type="OrthoDB" id="9782945at2"/>
<dbReference type="Proteomes" id="UP000002608">
    <property type="component" value="Chromosome"/>
</dbReference>
<dbReference type="GO" id="GO:0005886">
    <property type="term" value="C:plasma membrane"/>
    <property type="evidence" value="ECO:0007669"/>
    <property type="project" value="UniProtKB-SubCell"/>
</dbReference>
<dbReference type="GO" id="GO:0016655">
    <property type="term" value="F:oxidoreductase activity, acting on NAD(P)H, quinone or similar compound as acceptor"/>
    <property type="evidence" value="ECO:0007669"/>
    <property type="project" value="UniProtKB-UniRule"/>
</dbReference>
<dbReference type="GO" id="GO:0006814">
    <property type="term" value="P:sodium ion transport"/>
    <property type="evidence" value="ECO:0007669"/>
    <property type="project" value="UniProtKB-UniRule"/>
</dbReference>
<dbReference type="HAMAP" id="MF_00428">
    <property type="entry name" value="NqrD"/>
    <property type="match status" value="1"/>
</dbReference>
<dbReference type="InterPro" id="IPR011292">
    <property type="entry name" value="NqrD"/>
</dbReference>
<dbReference type="InterPro" id="IPR003667">
    <property type="entry name" value="NqrDE/RnfAE"/>
</dbReference>
<dbReference type="NCBIfam" id="TIGR01939">
    <property type="entry name" value="nqrD"/>
    <property type="match status" value="1"/>
</dbReference>
<dbReference type="NCBIfam" id="NF006777">
    <property type="entry name" value="PRK09292.1"/>
    <property type="match status" value="1"/>
</dbReference>
<dbReference type="NCBIfam" id="NF009070">
    <property type="entry name" value="PRK12405.1"/>
    <property type="match status" value="1"/>
</dbReference>
<dbReference type="PANTHER" id="PTHR30586">
    <property type="entry name" value="ELECTRON TRANSPORT COMPLEX PROTEIN RNFE"/>
    <property type="match status" value="1"/>
</dbReference>
<dbReference type="PANTHER" id="PTHR30586:SF1">
    <property type="entry name" value="NA(+)-TRANSLOCATING NADH-QUINONE REDUCTASE SUBUNIT D"/>
    <property type="match status" value="1"/>
</dbReference>
<dbReference type="Pfam" id="PF02508">
    <property type="entry name" value="Rnf-Nqr"/>
    <property type="match status" value="1"/>
</dbReference>
<dbReference type="PIRSF" id="PIRSF006102">
    <property type="entry name" value="NQR_DE"/>
    <property type="match status" value="1"/>
</dbReference>
<gene>
    <name evidence="1" type="primary">nqrD</name>
    <name type="ordered locus">Spea_3100</name>
</gene>
<accession>A8H779</accession>
<protein>
    <recommendedName>
        <fullName evidence="1">Na(+)-translocating NADH-quinone reductase subunit D</fullName>
        <shortName evidence="1">Na(+)-NQR subunit D</shortName>
        <shortName evidence="1">Na(+)-translocating NQR subunit D</shortName>
        <ecNumber evidence="1">7.2.1.1</ecNumber>
    </recommendedName>
    <alternativeName>
        <fullName evidence="1">NQR complex subunit D</fullName>
    </alternativeName>
    <alternativeName>
        <fullName evidence="1">NQR-1 subunit D</fullName>
    </alternativeName>
</protein>
<keyword id="KW-0997">Cell inner membrane</keyword>
<keyword id="KW-1003">Cell membrane</keyword>
<keyword id="KW-0406">Ion transport</keyword>
<keyword id="KW-0472">Membrane</keyword>
<keyword id="KW-0520">NAD</keyword>
<keyword id="KW-1185">Reference proteome</keyword>
<keyword id="KW-0915">Sodium</keyword>
<keyword id="KW-0739">Sodium transport</keyword>
<keyword id="KW-1278">Translocase</keyword>
<keyword id="KW-0812">Transmembrane</keyword>
<keyword id="KW-1133">Transmembrane helix</keyword>
<keyword id="KW-0813">Transport</keyword>
<keyword id="KW-0830">Ubiquinone</keyword>